<accession>Q80949</accession>
<comment type="function">
    <text evidence="1">Plays a role in viral genome replication by driving entry of quiescent cells into the cell cycle. Stimulation of progression from G1 to S phase allows the virus to efficiently use the cellular DNA replicating machinery to achieve viral genome replication. E7 protein has both transforming and trans-activating activities. Induces the disassembly of the E2F1 transcription factor from RB1, with subsequent transcriptional activation of E2F1-regulated S-phase genes. Interferes with host histone deacetylation mediated by HDAC1 and HDAC2, leading to transcription activation. Also plays a role in the inhibition of both antiviral and antiproliferative functions of host interferon alpha. Interaction with host TMEM173/STING impairs the ability of TMEM173/STING to sense cytosolic DNA and promote the production of type I interferon (IFN-alpha and IFN-beta).</text>
</comment>
<comment type="subunit">
    <text evidence="1">Homodimer. Homooligomer. Interacts with host RB1; this interaction induces dissociation of RB1-E2F1 complex thereby disrupting RB1 activity. Interacts with host EP300; this interaction represses EP300 transcriptional activity. Interacts with protein E2; this interaction inhibits E7 oncogenic activity. Interacts with host TMEM173/STING; this interaction impairs the ability of TMEM173/STING to sense cytosolic DNA and promote the production of type I interferon (IFN-alpha and IFN-beta).</text>
</comment>
<comment type="subcellular location">
    <subcellularLocation>
        <location evidence="1">Host cytoplasm</location>
    </subcellularLocation>
    <subcellularLocation>
        <location evidence="1">Host nucleus</location>
    </subcellularLocation>
    <text evidence="1">Predominantly found in the host nucleus.</text>
</comment>
<comment type="domain">
    <text evidence="1">The E7 terminal domain is an intrinsically disordered domain, whose flexibility and conformational transitions confer target adaptability to the oncoprotein. It allows adaptation to a variety of protein targets and exposes the PEST degradation sequence that regulates its turnover in the cell.</text>
</comment>
<comment type="PTM">
    <text evidence="1">Highly phosphorylated.</text>
</comment>
<comment type="similarity">
    <text evidence="1">Belongs to the papillomaviridae E7 protein family.</text>
</comment>
<proteinExistence type="inferred from homology"/>
<gene>
    <name evidence="1" type="primary">E7</name>
</gene>
<name>VE7_HPV61</name>
<organism>
    <name type="scientific">Human papillomavirus type 61</name>
    <dbReference type="NCBI Taxonomy" id="37116"/>
    <lineage>
        <taxon>Viruses</taxon>
        <taxon>Monodnaviria</taxon>
        <taxon>Shotokuvirae</taxon>
        <taxon>Cossaviricota</taxon>
        <taxon>Papovaviricetes</taxon>
        <taxon>Zurhausenvirales</taxon>
        <taxon>Papillomaviridae</taxon>
        <taxon>Firstpapillomavirinae</taxon>
        <taxon>Alphapapillomavirus</taxon>
        <taxon>Alphapapillomavirus 3</taxon>
    </lineage>
</organism>
<protein>
    <recommendedName>
        <fullName evidence="1">Protein E7</fullName>
    </recommendedName>
</protein>
<reference key="1">
    <citation type="submission" date="1995-10" db="EMBL/GenBank/DDBJ databases">
        <authorList>
            <person name="Delius H."/>
        </authorList>
    </citation>
    <scope>NUCLEOTIDE SEQUENCE [GENOMIC DNA]</scope>
</reference>
<reference key="2">
    <citation type="journal article" date="2002" name="Rev. Med. Virol.">
        <title>Interactions of SV40 large T antigen and other viral proteins with retinoblastoma tumour suppressor.</title>
        <authorList>
            <person name="Lee C."/>
            <person name="Cho Y."/>
        </authorList>
    </citation>
    <scope>REVIEW</scope>
</reference>
<organismHost>
    <name type="scientific">Homo sapiens</name>
    <name type="common">Human</name>
    <dbReference type="NCBI Taxonomy" id="9606"/>
</organismHost>
<sequence length="95" mass="10462">MHGQVATIKDIVLEERPEVVDLHCNEQLLDSSESEEEDSVREQLVEQAQQAYRVVTTCGICKCPVRLVVQCGDADLKVLHELLLGDLSIVCPGCA</sequence>
<evidence type="ECO:0000255" key="1">
    <source>
        <dbReference type="HAMAP-Rule" id="MF_04004"/>
    </source>
</evidence>
<feature type="chain" id="PRO_0000133456" description="Protein E7">
    <location>
        <begin position="1"/>
        <end position="95"/>
    </location>
</feature>
<feature type="zinc finger region" evidence="1">
    <location>
        <begin position="58"/>
        <end position="94"/>
    </location>
</feature>
<feature type="region of interest" description="E7 terminal domain" evidence="1">
    <location>
        <begin position="1"/>
        <end position="42"/>
    </location>
</feature>
<feature type="short sequence motif" description="LXCXE motif; interaction with host RB1 and TMEM173/STING" evidence="1">
    <location>
        <begin position="22"/>
        <end position="26"/>
    </location>
</feature>
<feature type="short sequence motif" description="Nuclear export signal" evidence="1">
    <location>
        <begin position="76"/>
        <end position="84"/>
    </location>
</feature>
<dbReference type="EMBL" id="U31793">
    <property type="protein sequence ID" value="AAA79493.1"/>
    <property type="molecule type" value="Genomic_DNA"/>
</dbReference>
<dbReference type="RefSeq" id="NP_043445.1">
    <property type="nucleotide sequence ID" value="NC_001694.1"/>
</dbReference>
<dbReference type="SMR" id="Q80949"/>
<dbReference type="GeneID" id="1403313"/>
<dbReference type="KEGG" id="vg:1403313"/>
<dbReference type="Proteomes" id="UP000007670">
    <property type="component" value="Genome"/>
</dbReference>
<dbReference type="GO" id="GO:0030430">
    <property type="term" value="C:host cell cytoplasm"/>
    <property type="evidence" value="ECO:0007669"/>
    <property type="project" value="UniProtKB-SubCell"/>
</dbReference>
<dbReference type="GO" id="GO:0042025">
    <property type="term" value="C:host cell nucleus"/>
    <property type="evidence" value="ECO:0007669"/>
    <property type="project" value="UniProtKB-SubCell"/>
</dbReference>
<dbReference type="GO" id="GO:0003677">
    <property type="term" value="F:DNA binding"/>
    <property type="evidence" value="ECO:0007669"/>
    <property type="project" value="UniProtKB-UniRule"/>
</dbReference>
<dbReference type="GO" id="GO:0003700">
    <property type="term" value="F:DNA-binding transcription factor activity"/>
    <property type="evidence" value="ECO:0007669"/>
    <property type="project" value="UniProtKB-UniRule"/>
</dbReference>
<dbReference type="GO" id="GO:0019904">
    <property type="term" value="F:protein domain specific binding"/>
    <property type="evidence" value="ECO:0007669"/>
    <property type="project" value="UniProtKB-UniRule"/>
</dbReference>
<dbReference type="GO" id="GO:0008270">
    <property type="term" value="F:zinc ion binding"/>
    <property type="evidence" value="ECO:0007669"/>
    <property type="project" value="UniProtKB-KW"/>
</dbReference>
<dbReference type="GO" id="GO:0006351">
    <property type="term" value="P:DNA-templated transcription"/>
    <property type="evidence" value="ECO:0007669"/>
    <property type="project" value="UniProtKB-UniRule"/>
</dbReference>
<dbReference type="GO" id="GO:0039645">
    <property type="term" value="P:symbiont-mediated perturbation of host cell cycle G1/S transition checkpoint"/>
    <property type="evidence" value="ECO:0007669"/>
    <property type="project" value="UniProtKB-UniRule"/>
</dbReference>
<dbReference type="GO" id="GO:0052170">
    <property type="term" value="P:symbiont-mediated suppression of host innate immune response"/>
    <property type="evidence" value="ECO:0007669"/>
    <property type="project" value="UniProtKB-KW"/>
</dbReference>
<dbReference type="GO" id="GO:0039502">
    <property type="term" value="P:symbiont-mediated suppression of host type I interferon-mediated signaling pathway"/>
    <property type="evidence" value="ECO:0007669"/>
    <property type="project" value="UniProtKB-UniRule"/>
</dbReference>
<dbReference type="Gene3D" id="3.30.160.330">
    <property type="match status" value="1"/>
</dbReference>
<dbReference type="HAMAP" id="MF_04004">
    <property type="entry name" value="PPV_E7"/>
    <property type="match status" value="1"/>
</dbReference>
<dbReference type="InterPro" id="IPR000148">
    <property type="entry name" value="Papilloma_E7"/>
</dbReference>
<dbReference type="Pfam" id="PF00527">
    <property type="entry name" value="E7"/>
    <property type="match status" value="1"/>
</dbReference>
<dbReference type="PIRSF" id="PIRSF003407">
    <property type="entry name" value="Papvi_E7"/>
    <property type="match status" value="1"/>
</dbReference>
<dbReference type="SUPFAM" id="SSF161234">
    <property type="entry name" value="E7 C-terminal domain-like"/>
    <property type="match status" value="1"/>
</dbReference>
<keyword id="KW-0010">Activator</keyword>
<keyword id="KW-0238">DNA-binding</keyword>
<keyword id="KW-0244">Early protein</keyword>
<keyword id="KW-1078">G1/S host cell cycle checkpoint dysregulation by virus</keyword>
<keyword id="KW-1035">Host cytoplasm</keyword>
<keyword id="KW-1048">Host nucleus</keyword>
<keyword id="KW-0945">Host-virus interaction</keyword>
<keyword id="KW-1090">Inhibition of host innate immune response by virus</keyword>
<keyword id="KW-1114">Inhibition of host interferon signaling pathway by virus</keyword>
<keyword id="KW-0922">Interferon antiviral system evasion</keyword>
<keyword id="KW-0479">Metal-binding</keyword>
<keyword id="KW-1121">Modulation of host cell cycle by virus</keyword>
<keyword id="KW-0553">Oncogene</keyword>
<keyword id="KW-1185">Reference proteome</keyword>
<keyword id="KW-0804">Transcription</keyword>
<keyword id="KW-0805">Transcription regulation</keyword>
<keyword id="KW-0899">Viral immunoevasion</keyword>
<keyword id="KW-0862">Zinc</keyword>
<keyword id="KW-0863">Zinc-finger</keyword>